<dbReference type="EMBL" id="BX294146">
    <property type="protein sequence ID" value="CAD75604.1"/>
    <property type="molecule type" value="Genomic_DNA"/>
</dbReference>
<dbReference type="RefSeq" id="NP_868057.1">
    <property type="nucleotide sequence ID" value="NC_005027.1"/>
</dbReference>
<dbReference type="RefSeq" id="WP_011121604.1">
    <property type="nucleotide sequence ID" value="NC_005027.1"/>
</dbReference>
<dbReference type="SMR" id="Q7UN15"/>
<dbReference type="FunCoup" id="Q7UN15">
    <property type="interactions" value="511"/>
</dbReference>
<dbReference type="STRING" id="243090.RB7839"/>
<dbReference type="EnsemblBacteria" id="CAD75604">
    <property type="protein sequence ID" value="CAD75604"/>
    <property type="gene ID" value="RB7839"/>
</dbReference>
<dbReference type="GeneID" id="90608442"/>
<dbReference type="KEGG" id="rba:RB7839"/>
<dbReference type="PATRIC" id="fig|243090.15.peg.3787"/>
<dbReference type="eggNOG" id="COG0091">
    <property type="taxonomic scope" value="Bacteria"/>
</dbReference>
<dbReference type="HOGENOM" id="CLU_083987_3_3_0"/>
<dbReference type="InParanoid" id="Q7UN15"/>
<dbReference type="OrthoDB" id="9805969at2"/>
<dbReference type="Proteomes" id="UP000001025">
    <property type="component" value="Chromosome"/>
</dbReference>
<dbReference type="GO" id="GO:0022625">
    <property type="term" value="C:cytosolic large ribosomal subunit"/>
    <property type="evidence" value="ECO:0000318"/>
    <property type="project" value="GO_Central"/>
</dbReference>
<dbReference type="GO" id="GO:0019843">
    <property type="term" value="F:rRNA binding"/>
    <property type="evidence" value="ECO:0007669"/>
    <property type="project" value="UniProtKB-UniRule"/>
</dbReference>
<dbReference type="GO" id="GO:0003735">
    <property type="term" value="F:structural constituent of ribosome"/>
    <property type="evidence" value="ECO:0000318"/>
    <property type="project" value="GO_Central"/>
</dbReference>
<dbReference type="GO" id="GO:0006412">
    <property type="term" value="P:translation"/>
    <property type="evidence" value="ECO:0000318"/>
    <property type="project" value="GO_Central"/>
</dbReference>
<dbReference type="CDD" id="cd00336">
    <property type="entry name" value="Ribosomal_L22"/>
    <property type="match status" value="1"/>
</dbReference>
<dbReference type="Gene3D" id="3.90.470.10">
    <property type="entry name" value="Ribosomal protein L22/L17"/>
    <property type="match status" value="1"/>
</dbReference>
<dbReference type="HAMAP" id="MF_01331_B">
    <property type="entry name" value="Ribosomal_uL22_B"/>
    <property type="match status" value="1"/>
</dbReference>
<dbReference type="InterPro" id="IPR001063">
    <property type="entry name" value="Ribosomal_uL22"/>
</dbReference>
<dbReference type="InterPro" id="IPR005727">
    <property type="entry name" value="Ribosomal_uL22_bac/chlpt-type"/>
</dbReference>
<dbReference type="InterPro" id="IPR047867">
    <property type="entry name" value="Ribosomal_uL22_bac/org-type"/>
</dbReference>
<dbReference type="InterPro" id="IPR036394">
    <property type="entry name" value="Ribosomal_uL22_sf"/>
</dbReference>
<dbReference type="NCBIfam" id="TIGR01044">
    <property type="entry name" value="rplV_bact"/>
    <property type="match status" value="1"/>
</dbReference>
<dbReference type="PANTHER" id="PTHR13501">
    <property type="entry name" value="CHLOROPLAST 50S RIBOSOMAL PROTEIN L22-RELATED"/>
    <property type="match status" value="1"/>
</dbReference>
<dbReference type="PANTHER" id="PTHR13501:SF8">
    <property type="entry name" value="LARGE RIBOSOMAL SUBUNIT PROTEIN UL22M"/>
    <property type="match status" value="1"/>
</dbReference>
<dbReference type="Pfam" id="PF00237">
    <property type="entry name" value="Ribosomal_L22"/>
    <property type="match status" value="1"/>
</dbReference>
<dbReference type="SUPFAM" id="SSF54843">
    <property type="entry name" value="Ribosomal protein L22"/>
    <property type="match status" value="1"/>
</dbReference>
<gene>
    <name evidence="1" type="primary">rplV</name>
    <name type="ordered locus">RB7839</name>
</gene>
<evidence type="ECO:0000255" key="1">
    <source>
        <dbReference type="HAMAP-Rule" id="MF_01331"/>
    </source>
</evidence>
<evidence type="ECO:0000305" key="2"/>
<feature type="chain" id="PRO_0000125211" description="Large ribosomal subunit protein uL22">
    <location>
        <begin position="1"/>
        <end position="119"/>
    </location>
</feature>
<organism>
    <name type="scientific">Rhodopirellula baltica (strain DSM 10527 / NCIMB 13988 / SH1)</name>
    <dbReference type="NCBI Taxonomy" id="243090"/>
    <lineage>
        <taxon>Bacteria</taxon>
        <taxon>Pseudomonadati</taxon>
        <taxon>Planctomycetota</taxon>
        <taxon>Planctomycetia</taxon>
        <taxon>Pirellulales</taxon>
        <taxon>Pirellulaceae</taxon>
        <taxon>Rhodopirellula</taxon>
    </lineage>
</organism>
<keyword id="KW-1185">Reference proteome</keyword>
<keyword id="KW-0687">Ribonucleoprotein</keyword>
<keyword id="KW-0689">Ribosomal protein</keyword>
<keyword id="KW-0694">RNA-binding</keyword>
<keyword id="KW-0699">rRNA-binding</keyword>
<name>RL22_RHOBA</name>
<comment type="function">
    <text evidence="1">This protein binds specifically to 23S rRNA; its binding is stimulated by other ribosomal proteins, e.g. L4, L17, and L20. It is important during the early stages of 50S assembly. It makes multiple contacts with different domains of the 23S rRNA in the assembled 50S subunit and ribosome (By similarity).</text>
</comment>
<comment type="function">
    <text evidence="1">The globular domain of the protein is located near the polypeptide exit tunnel on the outside of the subunit, while an extended beta-hairpin is found that lines the wall of the exit tunnel in the center of the 70S ribosome.</text>
</comment>
<comment type="subunit">
    <text evidence="1">Part of the 50S ribosomal subunit.</text>
</comment>
<comment type="similarity">
    <text evidence="1">Belongs to the universal ribosomal protein uL22 family.</text>
</comment>
<sequence>MSQFNAYHKNARISAQKVRLVADLVRGMFADEALDTLKYQPQRGARMLEKVIKSAVGNAQDPDQNSGRSHRIEELVITDVRVDGGPMFKRIQPRARGMAFMIKKRSSHIRVGLTHIENV</sequence>
<accession>Q7UN15</accession>
<reference key="1">
    <citation type="journal article" date="2003" name="Proc. Natl. Acad. Sci. U.S.A.">
        <title>Complete genome sequence of the marine planctomycete Pirellula sp. strain 1.</title>
        <authorList>
            <person name="Gloeckner F.O."/>
            <person name="Kube M."/>
            <person name="Bauer M."/>
            <person name="Teeling H."/>
            <person name="Lombardot T."/>
            <person name="Ludwig W."/>
            <person name="Gade D."/>
            <person name="Beck A."/>
            <person name="Borzym K."/>
            <person name="Heitmann K."/>
            <person name="Rabus R."/>
            <person name="Schlesner H."/>
            <person name="Amann R."/>
            <person name="Reinhardt R."/>
        </authorList>
    </citation>
    <scope>NUCLEOTIDE SEQUENCE [LARGE SCALE GENOMIC DNA]</scope>
    <source>
        <strain>DSM 10527 / NCIMB 13988 / SH1</strain>
    </source>
</reference>
<protein>
    <recommendedName>
        <fullName evidence="1">Large ribosomal subunit protein uL22</fullName>
    </recommendedName>
    <alternativeName>
        <fullName evidence="2">50S ribosomal protein L22</fullName>
    </alternativeName>
</protein>
<proteinExistence type="inferred from homology"/>